<gene>
    <name evidence="1" type="primary">rpsM</name>
    <name type="ordered locus">Exig_0121</name>
</gene>
<organism>
    <name type="scientific">Exiguobacterium sibiricum (strain DSM 17290 / CCUG 55495 / CIP 109462 / JCM 13490 / 255-15)</name>
    <dbReference type="NCBI Taxonomy" id="262543"/>
    <lineage>
        <taxon>Bacteria</taxon>
        <taxon>Bacillati</taxon>
        <taxon>Bacillota</taxon>
        <taxon>Bacilli</taxon>
        <taxon>Bacillales</taxon>
        <taxon>Bacillales Family XII. Incertae Sedis</taxon>
        <taxon>Exiguobacterium</taxon>
    </lineage>
</organism>
<sequence>MARIAGVDIPREKRIVISLTYIYGVGKTTAQKVLKEAGISEDTRTRELTEEQLNQLRDGLDKVKVEGDLRREISLNIKRLIEIGCYRGVRHRRGLPVRGQNTKNNSRTRKGPRRTVANKKK</sequence>
<accession>B1YGX5</accession>
<keyword id="KW-1185">Reference proteome</keyword>
<keyword id="KW-0687">Ribonucleoprotein</keyword>
<keyword id="KW-0689">Ribosomal protein</keyword>
<keyword id="KW-0694">RNA-binding</keyword>
<keyword id="KW-0699">rRNA-binding</keyword>
<keyword id="KW-0820">tRNA-binding</keyword>
<name>RS13_EXIS2</name>
<feature type="chain" id="PRO_1000141262" description="Small ribosomal subunit protein uS13">
    <location>
        <begin position="1"/>
        <end position="121"/>
    </location>
</feature>
<feature type="region of interest" description="Disordered" evidence="2">
    <location>
        <begin position="94"/>
        <end position="121"/>
    </location>
</feature>
<feature type="compositionally biased region" description="Basic residues" evidence="2">
    <location>
        <begin position="106"/>
        <end position="121"/>
    </location>
</feature>
<proteinExistence type="inferred from homology"/>
<dbReference type="EMBL" id="CP001022">
    <property type="protein sequence ID" value="ACB59608.1"/>
    <property type="molecule type" value="Genomic_DNA"/>
</dbReference>
<dbReference type="RefSeq" id="WP_012369033.1">
    <property type="nucleotide sequence ID" value="NC_010556.1"/>
</dbReference>
<dbReference type="SMR" id="B1YGX5"/>
<dbReference type="STRING" id="262543.Exig_0121"/>
<dbReference type="KEGG" id="esi:Exig_0121"/>
<dbReference type="eggNOG" id="COG0099">
    <property type="taxonomic scope" value="Bacteria"/>
</dbReference>
<dbReference type="HOGENOM" id="CLU_103849_1_1_9"/>
<dbReference type="OrthoDB" id="9803610at2"/>
<dbReference type="Proteomes" id="UP000001681">
    <property type="component" value="Chromosome"/>
</dbReference>
<dbReference type="GO" id="GO:0005829">
    <property type="term" value="C:cytosol"/>
    <property type="evidence" value="ECO:0007669"/>
    <property type="project" value="TreeGrafter"/>
</dbReference>
<dbReference type="GO" id="GO:0015935">
    <property type="term" value="C:small ribosomal subunit"/>
    <property type="evidence" value="ECO:0007669"/>
    <property type="project" value="TreeGrafter"/>
</dbReference>
<dbReference type="GO" id="GO:0019843">
    <property type="term" value="F:rRNA binding"/>
    <property type="evidence" value="ECO:0007669"/>
    <property type="project" value="UniProtKB-UniRule"/>
</dbReference>
<dbReference type="GO" id="GO:0003735">
    <property type="term" value="F:structural constituent of ribosome"/>
    <property type="evidence" value="ECO:0007669"/>
    <property type="project" value="InterPro"/>
</dbReference>
<dbReference type="GO" id="GO:0000049">
    <property type="term" value="F:tRNA binding"/>
    <property type="evidence" value="ECO:0007669"/>
    <property type="project" value="UniProtKB-UniRule"/>
</dbReference>
<dbReference type="GO" id="GO:0006412">
    <property type="term" value="P:translation"/>
    <property type="evidence" value="ECO:0007669"/>
    <property type="project" value="UniProtKB-UniRule"/>
</dbReference>
<dbReference type="FunFam" id="1.10.8.50:FF:000001">
    <property type="entry name" value="30S ribosomal protein S13"/>
    <property type="match status" value="1"/>
</dbReference>
<dbReference type="FunFam" id="4.10.910.10:FF:000001">
    <property type="entry name" value="30S ribosomal protein S13"/>
    <property type="match status" value="1"/>
</dbReference>
<dbReference type="Gene3D" id="1.10.8.50">
    <property type="match status" value="1"/>
</dbReference>
<dbReference type="Gene3D" id="4.10.910.10">
    <property type="entry name" value="30s ribosomal protein s13, domain 2"/>
    <property type="match status" value="1"/>
</dbReference>
<dbReference type="HAMAP" id="MF_01315">
    <property type="entry name" value="Ribosomal_uS13"/>
    <property type="match status" value="1"/>
</dbReference>
<dbReference type="InterPro" id="IPR027437">
    <property type="entry name" value="Rbsml_uS13_C"/>
</dbReference>
<dbReference type="InterPro" id="IPR001892">
    <property type="entry name" value="Ribosomal_uS13"/>
</dbReference>
<dbReference type="InterPro" id="IPR010979">
    <property type="entry name" value="Ribosomal_uS13-like_H2TH"/>
</dbReference>
<dbReference type="InterPro" id="IPR019980">
    <property type="entry name" value="Ribosomal_uS13_bac-type"/>
</dbReference>
<dbReference type="InterPro" id="IPR018269">
    <property type="entry name" value="Ribosomal_uS13_CS"/>
</dbReference>
<dbReference type="NCBIfam" id="TIGR03631">
    <property type="entry name" value="uS13_bact"/>
    <property type="match status" value="1"/>
</dbReference>
<dbReference type="PANTHER" id="PTHR10871">
    <property type="entry name" value="30S RIBOSOMAL PROTEIN S13/40S RIBOSOMAL PROTEIN S18"/>
    <property type="match status" value="1"/>
</dbReference>
<dbReference type="PANTHER" id="PTHR10871:SF1">
    <property type="entry name" value="SMALL RIBOSOMAL SUBUNIT PROTEIN US13M"/>
    <property type="match status" value="1"/>
</dbReference>
<dbReference type="Pfam" id="PF00416">
    <property type="entry name" value="Ribosomal_S13"/>
    <property type="match status" value="1"/>
</dbReference>
<dbReference type="PIRSF" id="PIRSF002134">
    <property type="entry name" value="Ribosomal_S13"/>
    <property type="match status" value="1"/>
</dbReference>
<dbReference type="SUPFAM" id="SSF46946">
    <property type="entry name" value="S13-like H2TH domain"/>
    <property type="match status" value="1"/>
</dbReference>
<dbReference type="PROSITE" id="PS00646">
    <property type="entry name" value="RIBOSOMAL_S13_1"/>
    <property type="match status" value="1"/>
</dbReference>
<dbReference type="PROSITE" id="PS50159">
    <property type="entry name" value="RIBOSOMAL_S13_2"/>
    <property type="match status" value="1"/>
</dbReference>
<comment type="function">
    <text evidence="1">Located at the top of the head of the 30S subunit, it contacts several helices of the 16S rRNA. In the 70S ribosome it contacts the 23S rRNA (bridge B1a) and protein L5 of the 50S subunit (bridge B1b), connecting the 2 subunits; these bridges are implicated in subunit movement. Contacts the tRNAs in the A and P-sites.</text>
</comment>
<comment type="subunit">
    <text evidence="1">Part of the 30S ribosomal subunit. Forms a loose heterodimer with protein S19. Forms two bridges to the 50S subunit in the 70S ribosome.</text>
</comment>
<comment type="similarity">
    <text evidence="1">Belongs to the universal ribosomal protein uS13 family.</text>
</comment>
<evidence type="ECO:0000255" key="1">
    <source>
        <dbReference type="HAMAP-Rule" id="MF_01315"/>
    </source>
</evidence>
<evidence type="ECO:0000256" key="2">
    <source>
        <dbReference type="SAM" id="MobiDB-lite"/>
    </source>
</evidence>
<evidence type="ECO:0000305" key="3"/>
<reference key="1">
    <citation type="submission" date="2008-04" db="EMBL/GenBank/DDBJ databases">
        <title>Complete sequence of chromosome of Exiguobacterium sibiricum 255-15.</title>
        <authorList>
            <consortium name="US DOE Joint Genome Institute"/>
            <person name="Copeland A."/>
            <person name="Lucas S."/>
            <person name="Lapidus A."/>
            <person name="Glavina del Rio T."/>
            <person name="Dalin E."/>
            <person name="Tice H."/>
            <person name="Bruce D."/>
            <person name="Goodwin L."/>
            <person name="Pitluck S."/>
            <person name="Kiss H."/>
            <person name="Chertkov O."/>
            <person name="Monk C."/>
            <person name="Brettin T."/>
            <person name="Detter J.C."/>
            <person name="Han C."/>
            <person name="Kuske C.R."/>
            <person name="Schmutz J."/>
            <person name="Larimer F."/>
            <person name="Land M."/>
            <person name="Hauser L."/>
            <person name="Kyrpides N."/>
            <person name="Mikhailova N."/>
            <person name="Vishnivetskaya T."/>
            <person name="Rodrigues D.F."/>
            <person name="Gilichinsky D."/>
            <person name="Tiedje J."/>
            <person name="Richardson P."/>
        </authorList>
    </citation>
    <scope>NUCLEOTIDE SEQUENCE [LARGE SCALE GENOMIC DNA]</scope>
    <source>
        <strain>DSM 17290 / CCUG 55495 / CIP 109462 / JCM 13490 / 255-15</strain>
    </source>
</reference>
<protein>
    <recommendedName>
        <fullName evidence="1">Small ribosomal subunit protein uS13</fullName>
    </recommendedName>
    <alternativeName>
        <fullName evidence="3">30S ribosomal protein S13</fullName>
    </alternativeName>
</protein>